<protein>
    <recommendedName>
        <fullName>T-cell surface glycoprotein CD8 beta-2 chain</fullName>
    </recommendedName>
    <alternativeName>
        <fullName evidence="4">CD8b pseudogene</fullName>
    </alternativeName>
</protein>
<keyword id="KW-1064">Adaptive immunity</keyword>
<keyword id="KW-1003">Cell membrane</keyword>
<keyword id="KW-1015">Disulfide bond</keyword>
<keyword id="KW-0325">Glycoprotein</keyword>
<keyword id="KW-0391">Immunity</keyword>
<keyword id="KW-0393">Immunoglobulin domain</keyword>
<keyword id="KW-0472">Membrane</keyword>
<keyword id="KW-1185">Reference proteome</keyword>
<keyword id="KW-0732">Signal</keyword>
<keyword id="KW-0812">Transmembrane</keyword>
<keyword id="KW-1133">Transmembrane helix</keyword>
<comment type="function">
    <text evidence="1">Identifies cytotoxic/suppressor T-cells that interact with MHC class I bearing targets. CD8 is thought to play a role in the process of T-cell mediated killing (By similarity).</text>
</comment>
<comment type="subunit">
    <text>In general heterodimer of an alpha and a beta chain linked by two disulfide bonds.</text>
</comment>
<comment type="subcellular location">
    <subcellularLocation>
        <location evidence="1">Cell membrane</location>
        <topology evidence="1">Single-pass type I membrane protein</topology>
    </subcellularLocation>
</comment>
<dbReference type="EMBL" id="AC108868">
    <property type="status" value="NOT_ANNOTATED_CDS"/>
    <property type="molecule type" value="Genomic_DNA"/>
</dbReference>
<dbReference type="EMBL" id="KF456689">
    <property type="status" value="NOT_ANNOTATED_CDS"/>
    <property type="molecule type" value="Genomic_DNA"/>
</dbReference>
<dbReference type="CCDS" id="CCDS86870.1"/>
<dbReference type="RefSeq" id="NP_001336656.1">
    <property type="nucleotide sequence ID" value="NM_001349727.2"/>
</dbReference>
<dbReference type="SMR" id="A6NJW9"/>
<dbReference type="FunCoup" id="A6NJW9">
    <property type="interactions" value="340"/>
</dbReference>
<dbReference type="STRING" id="9606.ENSP00000496416"/>
<dbReference type="GlyCosmos" id="A6NJW9">
    <property type="glycosylation" value="1 site, No reported glycans"/>
</dbReference>
<dbReference type="GlyGen" id="A6NJW9">
    <property type="glycosylation" value="1 site"/>
</dbReference>
<dbReference type="BioMuta" id="HGNC:1708"/>
<dbReference type="MassIVE" id="A6NJW9"/>
<dbReference type="PeptideAtlas" id="A6NJW9"/>
<dbReference type="ProteomicsDB" id="1359"/>
<dbReference type="Ensembl" id="ENST00000643224.2">
    <property type="protein sequence ID" value="ENSP00000496416.1"/>
    <property type="gene ID" value="ENSG00000254126.8"/>
</dbReference>
<dbReference type="GeneID" id="927"/>
<dbReference type="MANE-Select" id="ENST00000643224.2">
    <property type="protein sequence ID" value="ENSP00000496416.1"/>
    <property type="RefSeq nucleotide sequence ID" value="NM_001349727.2"/>
    <property type="RefSeq protein sequence ID" value="NP_001336656.1"/>
</dbReference>
<dbReference type="AGR" id="HGNC:1708"/>
<dbReference type="GeneCards" id="CD8B2"/>
<dbReference type="HGNC" id="HGNC:1708">
    <property type="gene designation" value="CD8B2"/>
</dbReference>
<dbReference type="HPA" id="ENSG00000254126">
    <property type="expression patterns" value="Group enriched (kidney, lymphoid tissue)"/>
</dbReference>
<dbReference type="neXtProt" id="NX_A6NJW9"/>
<dbReference type="OpenTargets" id="ENSG00000254126"/>
<dbReference type="VEuPathDB" id="HostDB:ENSG00000254126"/>
<dbReference type="GeneTree" id="ENSGT00510000048998"/>
<dbReference type="InParanoid" id="A6NJW9"/>
<dbReference type="OMA" id="YCMVENA"/>
<dbReference type="OrthoDB" id="9394844at2759"/>
<dbReference type="PAN-GO" id="A6NJW9">
    <property type="GO annotations" value="1 GO annotation based on evolutionary models"/>
</dbReference>
<dbReference type="PhylomeDB" id="A6NJW9"/>
<dbReference type="ChiTaRS" id="CD8BP">
    <property type="organism name" value="human"/>
</dbReference>
<dbReference type="Pharos" id="A6NJW9">
    <property type="development level" value="Tdark"/>
</dbReference>
<dbReference type="PRO" id="PR:A6NJW9"/>
<dbReference type="Proteomes" id="UP000005640">
    <property type="component" value="Chromosome 2"/>
</dbReference>
<dbReference type="RNAct" id="A6NJW9">
    <property type="molecule type" value="protein"/>
</dbReference>
<dbReference type="Bgee" id="ENSG00000254126">
    <property type="expression patterns" value="Expressed in calcaneal tendon and 61 other cell types or tissues"/>
</dbReference>
<dbReference type="ExpressionAtlas" id="A6NJW9">
    <property type="expression patterns" value="baseline and differential"/>
</dbReference>
<dbReference type="GO" id="GO:0009986">
    <property type="term" value="C:cell surface"/>
    <property type="evidence" value="ECO:0000318"/>
    <property type="project" value="GO_Central"/>
</dbReference>
<dbReference type="GO" id="GO:0005886">
    <property type="term" value="C:plasma membrane"/>
    <property type="evidence" value="ECO:0007669"/>
    <property type="project" value="UniProtKB-SubCell"/>
</dbReference>
<dbReference type="GO" id="GO:0015026">
    <property type="term" value="F:coreceptor activity"/>
    <property type="evidence" value="ECO:0007669"/>
    <property type="project" value="InterPro"/>
</dbReference>
<dbReference type="GO" id="GO:0042288">
    <property type="term" value="F:MHC class I protein binding"/>
    <property type="evidence" value="ECO:0007669"/>
    <property type="project" value="InterPro"/>
</dbReference>
<dbReference type="GO" id="GO:0002250">
    <property type="term" value="P:adaptive immune response"/>
    <property type="evidence" value="ECO:0007669"/>
    <property type="project" value="UniProtKB-KW"/>
</dbReference>
<dbReference type="GO" id="GO:0050776">
    <property type="term" value="P:regulation of immune response"/>
    <property type="evidence" value="ECO:0007669"/>
    <property type="project" value="InterPro"/>
</dbReference>
<dbReference type="CDD" id="cd07700">
    <property type="entry name" value="IgV_CD8_beta"/>
    <property type="match status" value="1"/>
</dbReference>
<dbReference type="FunFam" id="2.60.40.10:FF:000645">
    <property type="entry name" value="T-cell surface glycoprotein CD8 beta chain"/>
    <property type="match status" value="1"/>
</dbReference>
<dbReference type="Gene3D" id="2.60.40.10">
    <property type="entry name" value="Immunoglobulins"/>
    <property type="match status" value="1"/>
</dbReference>
<dbReference type="InterPro" id="IPR042414">
    <property type="entry name" value="CD8B"/>
</dbReference>
<dbReference type="InterPro" id="IPR007110">
    <property type="entry name" value="Ig-like_dom"/>
</dbReference>
<dbReference type="InterPro" id="IPR036179">
    <property type="entry name" value="Ig-like_dom_sf"/>
</dbReference>
<dbReference type="InterPro" id="IPR013783">
    <property type="entry name" value="Ig-like_fold"/>
</dbReference>
<dbReference type="InterPro" id="IPR003599">
    <property type="entry name" value="Ig_sub"/>
</dbReference>
<dbReference type="InterPro" id="IPR013106">
    <property type="entry name" value="Ig_V-set"/>
</dbReference>
<dbReference type="PANTHER" id="PTHR11292">
    <property type="entry name" value="T-CELL SURFACE GLYCOPROTEIN CD8 BETA CHAIN"/>
    <property type="match status" value="1"/>
</dbReference>
<dbReference type="PANTHER" id="PTHR11292:SF7">
    <property type="entry name" value="T-CELL SURFACE GLYCOPROTEIN CD8 BETA CHAIN-RELATED"/>
    <property type="match status" value="1"/>
</dbReference>
<dbReference type="Pfam" id="PF07686">
    <property type="entry name" value="V-set"/>
    <property type="match status" value="1"/>
</dbReference>
<dbReference type="SMART" id="SM00409">
    <property type="entry name" value="IG"/>
    <property type="match status" value="1"/>
</dbReference>
<dbReference type="SUPFAM" id="SSF48726">
    <property type="entry name" value="Immunoglobulin"/>
    <property type="match status" value="1"/>
</dbReference>
<dbReference type="PROSITE" id="PS50835">
    <property type="entry name" value="IG_LIKE"/>
    <property type="match status" value="1"/>
</dbReference>
<sequence>MRPRLWLLLAAQLTVLHGNSVLQQTPAYIKVQTNKMVMLSCEAKISLSNMCIYWLRQRQAPSSDSHHEFLTLWDSAKGTIHGEEVEQEKIAVFRDASRFILNLTSVKPEDSGIYFCMIVGSPELTFGKGTQLSVVDFLPTTAQPTKKSTLKKRVCRLPRPETQKGPLCSPVTLGLLVAGVLVLLVSLGVAMHLCCRRRRARLRFMKQFYK</sequence>
<proteinExistence type="inferred from homology"/>
<gene>
    <name evidence="4" type="primary">CD8B2</name>
    <name evidence="4" type="synonym">CD8BP</name>
</gene>
<feature type="signal peptide" evidence="2">
    <location>
        <begin position="1"/>
        <end position="18"/>
    </location>
</feature>
<feature type="chain" id="PRO_0000341228" description="T-cell surface glycoprotein CD8 beta-2 chain">
    <location>
        <begin position="19"/>
        <end position="210"/>
    </location>
</feature>
<feature type="topological domain" description="Extracellular" evidence="2">
    <location>
        <begin position="19"/>
        <end position="170"/>
    </location>
</feature>
<feature type="transmembrane region" description="Helical" evidence="2">
    <location>
        <begin position="171"/>
        <end position="191"/>
    </location>
</feature>
<feature type="topological domain" description="Cytoplasmic" evidence="2">
    <location>
        <begin position="192"/>
        <end position="210"/>
    </location>
</feature>
<feature type="domain" description="Ig-like V-type">
    <location>
        <begin position="19"/>
        <end position="132"/>
    </location>
</feature>
<feature type="glycosylation site" description="N-linked (GlcNAc...) asparagine" evidence="2">
    <location>
        <position position="102"/>
    </location>
</feature>
<feature type="disulfide bond" evidence="3">
    <location>
        <begin position="41"/>
        <end position="116"/>
    </location>
</feature>
<organism>
    <name type="scientific">Homo sapiens</name>
    <name type="common">Human</name>
    <dbReference type="NCBI Taxonomy" id="9606"/>
    <lineage>
        <taxon>Eukaryota</taxon>
        <taxon>Metazoa</taxon>
        <taxon>Chordata</taxon>
        <taxon>Craniata</taxon>
        <taxon>Vertebrata</taxon>
        <taxon>Euteleostomi</taxon>
        <taxon>Mammalia</taxon>
        <taxon>Eutheria</taxon>
        <taxon>Euarchontoglires</taxon>
        <taxon>Primates</taxon>
        <taxon>Haplorrhini</taxon>
        <taxon>Catarrhini</taxon>
        <taxon>Hominidae</taxon>
        <taxon>Homo</taxon>
    </lineage>
</organism>
<evidence type="ECO:0000250" key="1"/>
<evidence type="ECO:0000255" key="2"/>
<evidence type="ECO:0000255" key="3">
    <source>
        <dbReference type="PROSITE-ProRule" id="PRU00114"/>
    </source>
</evidence>
<evidence type="ECO:0000312" key="4">
    <source>
        <dbReference type="HGNC" id="HGNC:1708"/>
    </source>
</evidence>
<reference key="1">
    <citation type="journal article" date="2005" name="Nature">
        <title>Generation and annotation of the DNA sequences of human chromosomes 2 and 4.</title>
        <authorList>
            <person name="Hillier L.W."/>
            <person name="Graves T.A."/>
            <person name="Fulton R.S."/>
            <person name="Fulton L.A."/>
            <person name="Pepin K.H."/>
            <person name="Minx P."/>
            <person name="Wagner-McPherson C."/>
            <person name="Layman D."/>
            <person name="Wylie K."/>
            <person name="Sekhon M."/>
            <person name="Becker M.C."/>
            <person name="Fewell G.A."/>
            <person name="Delehaunty K.D."/>
            <person name="Miner T.L."/>
            <person name="Nash W.E."/>
            <person name="Kremitzki C."/>
            <person name="Oddy L."/>
            <person name="Du H."/>
            <person name="Sun H."/>
            <person name="Bradshaw-Cordum H."/>
            <person name="Ali J."/>
            <person name="Carter J."/>
            <person name="Cordes M."/>
            <person name="Harris A."/>
            <person name="Isak A."/>
            <person name="van Brunt A."/>
            <person name="Nguyen C."/>
            <person name="Du F."/>
            <person name="Courtney L."/>
            <person name="Kalicki J."/>
            <person name="Ozersky P."/>
            <person name="Abbott S."/>
            <person name="Armstrong J."/>
            <person name="Belter E.A."/>
            <person name="Caruso L."/>
            <person name="Cedroni M."/>
            <person name="Cotton M."/>
            <person name="Davidson T."/>
            <person name="Desai A."/>
            <person name="Elliott G."/>
            <person name="Erb T."/>
            <person name="Fronick C."/>
            <person name="Gaige T."/>
            <person name="Haakenson W."/>
            <person name="Haglund K."/>
            <person name="Holmes A."/>
            <person name="Harkins R."/>
            <person name="Kim K."/>
            <person name="Kruchowski S.S."/>
            <person name="Strong C.M."/>
            <person name="Grewal N."/>
            <person name="Goyea E."/>
            <person name="Hou S."/>
            <person name="Levy A."/>
            <person name="Martinka S."/>
            <person name="Mead K."/>
            <person name="McLellan M.D."/>
            <person name="Meyer R."/>
            <person name="Randall-Maher J."/>
            <person name="Tomlinson C."/>
            <person name="Dauphin-Kohlberg S."/>
            <person name="Kozlowicz-Reilly A."/>
            <person name="Shah N."/>
            <person name="Swearengen-Shahid S."/>
            <person name="Snider J."/>
            <person name="Strong J.T."/>
            <person name="Thompson J."/>
            <person name="Yoakum M."/>
            <person name="Leonard S."/>
            <person name="Pearman C."/>
            <person name="Trani L."/>
            <person name="Radionenko M."/>
            <person name="Waligorski J.E."/>
            <person name="Wang C."/>
            <person name="Rock S.M."/>
            <person name="Tin-Wollam A.-M."/>
            <person name="Maupin R."/>
            <person name="Latreille P."/>
            <person name="Wendl M.C."/>
            <person name="Yang S.-P."/>
            <person name="Pohl C."/>
            <person name="Wallis J.W."/>
            <person name="Spieth J."/>
            <person name="Bieri T.A."/>
            <person name="Berkowicz N."/>
            <person name="Nelson J.O."/>
            <person name="Osborne J."/>
            <person name="Ding L."/>
            <person name="Meyer R."/>
            <person name="Sabo A."/>
            <person name="Shotland Y."/>
            <person name="Sinha P."/>
            <person name="Wohldmann P.E."/>
            <person name="Cook L.L."/>
            <person name="Hickenbotham M.T."/>
            <person name="Eldred J."/>
            <person name="Williams D."/>
            <person name="Jones T.A."/>
            <person name="She X."/>
            <person name="Ciccarelli F.D."/>
            <person name="Izaurralde E."/>
            <person name="Taylor J."/>
            <person name="Schmutz J."/>
            <person name="Myers R.M."/>
            <person name="Cox D.R."/>
            <person name="Huang X."/>
            <person name="McPherson J.D."/>
            <person name="Mardis E.R."/>
            <person name="Clifton S.W."/>
            <person name="Warren W.C."/>
            <person name="Chinwalla A.T."/>
            <person name="Eddy S.R."/>
            <person name="Marra M.A."/>
            <person name="Ovcharenko I."/>
            <person name="Furey T.S."/>
            <person name="Miller W."/>
            <person name="Eichler E.E."/>
            <person name="Bork P."/>
            <person name="Suyama M."/>
            <person name="Torrents D."/>
            <person name="Waterston R.H."/>
            <person name="Wilson R.K."/>
        </authorList>
    </citation>
    <scope>NUCLEOTIDE SEQUENCE [LARGE SCALE GENOMIC DNA]</scope>
</reference>
<reference key="2">
    <citation type="journal article" date="1992" name="J. Immunol.">
        <title>Recent duplication of the two human CD8 beta-chain genes.</title>
        <authorList>
            <person name="Nakayama K."/>
            <person name="Kawachi Y."/>
            <person name="Tokito S."/>
            <person name="Minami N."/>
            <person name="Yamamoto R."/>
            <person name="Imai T."/>
            <person name="Gachelin G."/>
            <person name="Nakauchi H."/>
        </authorList>
    </citation>
    <scope>NUCLEOTIDE SEQUENCE [GENOMIC DNA]</scope>
</reference>
<reference key="3">
    <citation type="journal article" date="1993" name="Eur. J. Immunol.">
        <title>Transcriptional diversity at the duplicated human CD8 beta loci.</title>
        <authorList>
            <person name="DiSanto J.P."/>
            <person name="Smith D."/>
            <person name="de Bruin D."/>
            <person name="Lacy E."/>
            <person name="Flomenberg N."/>
        </authorList>
    </citation>
    <scope>IDENTIFICATION</scope>
</reference>
<name>CD8B2_HUMAN</name>
<accession>A6NJW9</accession>
<accession>A0A2R8Y7N9</accession>